<keyword id="KW-0536">Nodulation</keyword>
<keyword id="KW-0614">Plasmid</keyword>
<keyword id="KW-1185">Reference proteome</keyword>
<keyword id="KW-0808">Transferase</keyword>
<gene>
    <name type="primary">noeE</name>
    <name type="ordered locus">NGR_a03480</name>
    <name type="ORF">y4hB</name>
</gene>
<organism>
    <name type="scientific">Sinorhizobium fredii (strain NBRC 101917 / NGR234)</name>
    <dbReference type="NCBI Taxonomy" id="394"/>
    <lineage>
        <taxon>Bacteria</taxon>
        <taxon>Pseudomonadati</taxon>
        <taxon>Pseudomonadota</taxon>
        <taxon>Alphaproteobacteria</taxon>
        <taxon>Hyphomicrobiales</taxon>
        <taxon>Rhizobiaceae</taxon>
        <taxon>Sinorhizobium/Ensifer group</taxon>
        <taxon>Sinorhizobium</taxon>
    </lineage>
</organism>
<reference key="1">
    <citation type="journal article" date="1997" name="Mol. Microbiol.">
        <title>Sulphation of Rhizobium sp. NGR234 Nod factors is dependent on noeE, a new host-specificity gene.</title>
        <authorList>
            <person name="Hanin M."/>
            <person name="Jabbouri S."/>
            <person name="Quesada-Vincens S."/>
            <person name="Freiberg C."/>
            <person name="Perret X."/>
            <person name="Broughton W.J."/>
            <person name="Fellay R."/>
        </authorList>
    </citation>
    <scope>NUCLEOTIDE SEQUENCE [GENOMIC DNA]</scope>
</reference>
<reference key="2">
    <citation type="journal article" date="1997" name="Nature">
        <title>Molecular basis of symbiosis between Rhizobium and legumes.</title>
        <authorList>
            <person name="Freiberg C.A."/>
            <person name="Fellay R."/>
            <person name="Bairoch A."/>
            <person name="Broughton W.J."/>
            <person name="Rosenthal A."/>
            <person name="Perret X."/>
        </authorList>
    </citation>
    <scope>NUCLEOTIDE SEQUENCE [LARGE SCALE GENOMIC DNA]</scope>
    <source>
        <strain>NBRC 101917 / NGR234</strain>
    </source>
</reference>
<reference key="3">
    <citation type="journal article" date="2009" name="Appl. Environ. Microbiol.">
        <title>Rhizobium sp. strain NGR234 possesses a remarkable number of secretion systems.</title>
        <authorList>
            <person name="Schmeisser C."/>
            <person name="Liesegang H."/>
            <person name="Krysciak D."/>
            <person name="Bakkou N."/>
            <person name="Le Quere A."/>
            <person name="Wollherr A."/>
            <person name="Heinemeyer I."/>
            <person name="Morgenstern B."/>
            <person name="Pommerening-Roeser A."/>
            <person name="Flores M."/>
            <person name="Palacios R."/>
            <person name="Brenner S."/>
            <person name="Gottschalk G."/>
            <person name="Schmitz R.A."/>
            <person name="Broughton W.J."/>
            <person name="Perret X."/>
            <person name="Strittmatter A.W."/>
            <person name="Streit W.R."/>
        </authorList>
    </citation>
    <scope>NUCLEOTIDE SEQUENCE [LARGE SCALE GENOMIC DNA]</scope>
    <source>
        <strain>NBRC 101917 / NGR234</strain>
    </source>
</reference>
<accession>P55472</accession>
<accession>P72326</accession>
<protein>
    <recommendedName>
        <fullName>Nodulation protein NoeE</fullName>
        <ecNumber>2.8.2.-</ecNumber>
    </recommendedName>
</protein>
<name>NOEE_SINFN</name>
<geneLocation type="plasmid">
    <name>sym pNGR234a</name>
</geneLocation>
<dbReference type="EC" id="2.8.2.-"/>
<dbReference type="EMBL" id="Y09415">
    <property type="protein sequence ID" value="CAA70569.1"/>
    <property type="molecule type" value="Genomic_DNA"/>
</dbReference>
<dbReference type="EMBL" id="U00090">
    <property type="protein sequence ID" value="AAB91690.1"/>
    <property type="molecule type" value="Genomic_DNA"/>
</dbReference>
<dbReference type="RefSeq" id="NP_443878.1">
    <property type="nucleotide sequence ID" value="NC_000914.2"/>
</dbReference>
<dbReference type="RefSeq" id="WP_010875362.1">
    <property type="nucleotide sequence ID" value="NC_000914.2"/>
</dbReference>
<dbReference type="SMR" id="P55472"/>
<dbReference type="KEGG" id="rhi:NGR_a03480"/>
<dbReference type="PATRIC" id="fig|394.7.peg.356"/>
<dbReference type="eggNOG" id="COG3551">
    <property type="taxonomic scope" value="Bacteria"/>
</dbReference>
<dbReference type="HOGENOM" id="CLU_655328_0_0_5"/>
<dbReference type="OrthoDB" id="9800698at2"/>
<dbReference type="Proteomes" id="UP000001054">
    <property type="component" value="Plasmid pNGR234a"/>
</dbReference>
<dbReference type="GO" id="GO:0008476">
    <property type="term" value="F:protein-tyrosine sulfotransferase activity"/>
    <property type="evidence" value="ECO:0007669"/>
    <property type="project" value="InterPro"/>
</dbReference>
<dbReference type="Gene3D" id="3.40.50.300">
    <property type="entry name" value="P-loop containing nucleotide triphosphate hydrolases"/>
    <property type="match status" value="1"/>
</dbReference>
<dbReference type="InterPro" id="IPR027417">
    <property type="entry name" value="P-loop_NTPase"/>
</dbReference>
<dbReference type="InterPro" id="IPR026634">
    <property type="entry name" value="TPST-like"/>
</dbReference>
<dbReference type="PANTHER" id="PTHR12788:SF10">
    <property type="entry name" value="PROTEIN-TYROSINE SULFOTRANSFERASE"/>
    <property type="match status" value="1"/>
</dbReference>
<dbReference type="PANTHER" id="PTHR12788">
    <property type="entry name" value="PROTEIN-TYROSINE SULFOTRANSFERASE 2"/>
    <property type="match status" value="1"/>
</dbReference>
<dbReference type="Pfam" id="PF13469">
    <property type="entry name" value="Sulfotransfer_3"/>
    <property type="match status" value="1"/>
</dbReference>
<dbReference type="SUPFAM" id="SSF52540">
    <property type="entry name" value="P-loop containing nucleoside triphosphate hydrolases"/>
    <property type="match status" value="1"/>
</dbReference>
<feature type="chain" id="PRO_0000096923" description="Nodulation protein NoeE">
    <location>
        <begin position="1"/>
        <end position="419"/>
    </location>
</feature>
<proteinExistence type="predicted"/>
<comment type="function">
    <text>Required for the formation of sulfated nod factor. Proposed to transfer activated sulfate (PAPS) to the fucose of the nod factor.</text>
</comment>
<sequence length="419" mass="46569">MSRDVSPLPLICFLLGIPRSGTTLLAHLLQQHPDITAPPEPWLMLALEAFGRVDHRHPAGASLIQVAACEFLGRIDRISVSRVFADAAYSQYLAAAGKRTLIDKTPRYWMVLDYLHSLYPEAPHILLLRNPYAIAASLKSTWGVPFVSERCPPTSVSCLAELVTGTPTAAVALALADLVLGLPALAMQRGRRHTQVVRYERLVERPDEEIQRVIAGLGYDPAGIVFAGVEQTEYLRLSSFGDRRLLKKKAVDNRSVETWRTELTIEEMQTVTDLVGADLLVELGYEQSLQHARDAGIVDRGKAVTERYRRVFQTWWDLRRGEGEGIPAGACEYNSIFQQAEEDNTISSSSSTLGEAQRLPEFKLGENLQLGASMVAQLKRALMASEDDRATQLEALRNRDAAIEALRREVVRLEQSLTK</sequence>